<feature type="chain" id="PRO_0000052901" description="Hemoglobin subunit beta">
    <location>
        <begin position="1"/>
        <end position="146"/>
    </location>
</feature>
<feature type="domain" description="Globin" evidence="3">
    <location>
        <begin position="2"/>
        <end position="146"/>
    </location>
</feature>
<feature type="binding site" description="distal binding residue">
    <location>
        <position position="63"/>
    </location>
    <ligand>
        <name>heme b</name>
        <dbReference type="ChEBI" id="CHEBI:60344"/>
    </ligand>
    <ligandPart>
        <name>Fe</name>
        <dbReference type="ChEBI" id="CHEBI:18248"/>
    </ligandPart>
</feature>
<feature type="binding site" description="proximal binding residue">
    <location>
        <position position="92"/>
    </location>
    <ligand>
        <name>heme b</name>
        <dbReference type="ChEBI" id="CHEBI:60344"/>
    </ligand>
    <ligandPart>
        <name>Fe</name>
        <dbReference type="ChEBI" id="CHEBI:18248"/>
    </ligandPart>
</feature>
<feature type="modified residue" description="N-acetylvaline" evidence="1">
    <location>
        <position position="1"/>
    </location>
</feature>
<feature type="modified residue" description="Phosphothreonine" evidence="2">
    <location>
        <position position="12"/>
    </location>
</feature>
<feature type="modified residue" description="Phosphoserine" evidence="2">
    <location>
        <position position="44"/>
    </location>
</feature>
<feature type="modified residue" description="N6-acetyllysine" evidence="2">
    <location>
        <position position="59"/>
    </location>
</feature>
<feature type="modified residue" description="N6-acetyllysine" evidence="2">
    <location>
        <position position="82"/>
    </location>
</feature>
<feature type="modified residue" description="S-nitrosocysteine" evidence="2">
    <location>
        <position position="93"/>
    </location>
</feature>
<feature type="modified residue" description="N6-acetyllysine" evidence="2">
    <location>
        <position position="144"/>
    </location>
</feature>
<sequence>VHLTGEEKSAVTALWGKVNVDEVGGEALGRLLVVYPWTQRFFESFGDLSTPDAVMNNPKVKAHGKKVLGAFSDGLTHLDNLKGTFAHLSELHCDKLHVDPENFRLLGNVLVCVLAHHFGKEFTPVVQAAYQKVVAGVANALAHKYH</sequence>
<keyword id="KW-0007">Acetylation</keyword>
<keyword id="KW-0903">Direct protein sequencing</keyword>
<keyword id="KW-0349">Heme</keyword>
<keyword id="KW-0408">Iron</keyword>
<keyword id="KW-0479">Metal-binding</keyword>
<keyword id="KW-0561">Oxygen transport</keyword>
<keyword id="KW-0597">Phosphoprotein</keyword>
<keyword id="KW-0702">S-nitrosylation</keyword>
<keyword id="KW-0813">Transport</keyword>
<gene>
    <name type="primary">HBB</name>
</gene>
<accession>P18985</accession>
<reference key="1">
    <citation type="journal article" date="1984" name="J. Biochem.">
        <title>Primary structures of adult hemoglobins of silvery marmoset, Callithrix argentatus, and cotton-headed tamarin, Saguinus oedipus.</title>
        <authorList>
            <person name="Maita T."/>
            <person name="Hayashida M."/>
            <person name="Matsuda G."/>
        </authorList>
    </citation>
    <scope>PROTEIN SEQUENCE</scope>
</reference>
<comment type="function">
    <text>Involved in oxygen transport from the lung to the various peripheral tissues.</text>
</comment>
<comment type="subunit">
    <text>Heterotetramer of two alpha chains and two beta chains.</text>
</comment>
<comment type="tissue specificity">
    <text>Red blood cells.</text>
</comment>
<comment type="similarity">
    <text evidence="3">Belongs to the globin family.</text>
</comment>
<protein>
    <recommendedName>
        <fullName>Hemoglobin subunit beta</fullName>
    </recommendedName>
    <alternativeName>
        <fullName>Beta-globin</fullName>
    </alternativeName>
    <alternativeName>
        <fullName>Hemoglobin beta chain</fullName>
    </alternativeName>
</protein>
<dbReference type="PIR" id="S06513">
    <property type="entry name" value="HBCJB"/>
</dbReference>
<dbReference type="SMR" id="P18985"/>
<dbReference type="GO" id="GO:0072562">
    <property type="term" value="C:blood microparticle"/>
    <property type="evidence" value="ECO:0007669"/>
    <property type="project" value="TreeGrafter"/>
</dbReference>
<dbReference type="GO" id="GO:0031838">
    <property type="term" value="C:haptoglobin-hemoglobin complex"/>
    <property type="evidence" value="ECO:0007669"/>
    <property type="project" value="TreeGrafter"/>
</dbReference>
<dbReference type="GO" id="GO:0005833">
    <property type="term" value="C:hemoglobin complex"/>
    <property type="evidence" value="ECO:0007669"/>
    <property type="project" value="InterPro"/>
</dbReference>
<dbReference type="GO" id="GO:0031720">
    <property type="term" value="F:haptoglobin binding"/>
    <property type="evidence" value="ECO:0007669"/>
    <property type="project" value="TreeGrafter"/>
</dbReference>
<dbReference type="GO" id="GO:0020037">
    <property type="term" value="F:heme binding"/>
    <property type="evidence" value="ECO:0007669"/>
    <property type="project" value="InterPro"/>
</dbReference>
<dbReference type="GO" id="GO:0031721">
    <property type="term" value="F:hemoglobin alpha binding"/>
    <property type="evidence" value="ECO:0007669"/>
    <property type="project" value="TreeGrafter"/>
</dbReference>
<dbReference type="GO" id="GO:0046872">
    <property type="term" value="F:metal ion binding"/>
    <property type="evidence" value="ECO:0007669"/>
    <property type="project" value="UniProtKB-KW"/>
</dbReference>
<dbReference type="GO" id="GO:0043177">
    <property type="term" value="F:organic acid binding"/>
    <property type="evidence" value="ECO:0007669"/>
    <property type="project" value="TreeGrafter"/>
</dbReference>
<dbReference type="GO" id="GO:0019825">
    <property type="term" value="F:oxygen binding"/>
    <property type="evidence" value="ECO:0007669"/>
    <property type="project" value="InterPro"/>
</dbReference>
<dbReference type="GO" id="GO:0005344">
    <property type="term" value="F:oxygen carrier activity"/>
    <property type="evidence" value="ECO:0007669"/>
    <property type="project" value="UniProtKB-KW"/>
</dbReference>
<dbReference type="GO" id="GO:0004601">
    <property type="term" value="F:peroxidase activity"/>
    <property type="evidence" value="ECO:0007669"/>
    <property type="project" value="TreeGrafter"/>
</dbReference>
<dbReference type="GO" id="GO:0042744">
    <property type="term" value="P:hydrogen peroxide catabolic process"/>
    <property type="evidence" value="ECO:0007669"/>
    <property type="project" value="TreeGrafter"/>
</dbReference>
<dbReference type="CDD" id="cd08925">
    <property type="entry name" value="Hb-beta-like"/>
    <property type="match status" value="1"/>
</dbReference>
<dbReference type="FunFam" id="1.10.490.10:FF:000001">
    <property type="entry name" value="Hemoglobin subunit beta"/>
    <property type="match status" value="1"/>
</dbReference>
<dbReference type="Gene3D" id="1.10.490.10">
    <property type="entry name" value="Globins"/>
    <property type="match status" value="1"/>
</dbReference>
<dbReference type="InterPro" id="IPR000971">
    <property type="entry name" value="Globin"/>
</dbReference>
<dbReference type="InterPro" id="IPR009050">
    <property type="entry name" value="Globin-like_sf"/>
</dbReference>
<dbReference type="InterPro" id="IPR012292">
    <property type="entry name" value="Globin/Proto"/>
</dbReference>
<dbReference type="InterPro" id="IPR002337">
    <property type="entry name" value="Hemoglobin_b"/>
</dbReference>
<dbReference type="InterPro" id="IPR050056">
    <property type="entry name" value="Hemoglobin_oxygen_transport"/>
</dbReference>
<dbReference type="PANTHER" id="PTHR11442">
    <property type="entry name" value="HEMOGLOBIN FAMILY MEMBER"/>
    <property type="match status" value="1"/>
</dbReference>
<dbReference type="PANTHER" id="PTHR11442:SF42">
    <property type="entry name" value="HEMOGLOBIN SUBUNIT BETA"/>
    <property type="match status" value="1"/>
</dbReference>
<dbReference type="Pfam" id="PF00042">
    <property type="entry name" value="Globin"/>
    <property type="match status" value="1"/>
</dbReference>
<dbReference type="PRINTS" id="PR00814">
    <property type="entry name" value="BETAHAEM"/>
</dbReference>
<dbReference type="SUPFAM" id="SSF46458">
    <property type="entry name" value="Globin-like"/>
    <property type="match status" value="1"/>
</dbReference>
<dbReference type="PROSITE" id="PS01033">
    <property type="entry name" value="GLOBIN"/>
    <property type="match status" value="1"/>
</dbReference>
<evidence type="ECO:0000250" key="1">
    <source>
        <dbReference type="UniProtKB" id="P02086"/>
    </source>
</evidence>
<evidence type="ECO:0000250" key="2">
    <source>
        <dbReference type="UniProtKB" id="P68871"/>
    </source>
</evidence>
<evidence type="ECO:0000255" key="3">
    <source>
        <dbReference type="PROSITE-ProRule" id="PRU00238"/>
    </source>
</evidence>
<name>HBB_MICAD</name>
<proteinExistence type="evidence at protein level"/>
<organism>
    <name type="scientific">Mico argentatus</name>
    <name type="common">Silvery marmoset</name>
    <name type="synonym">Callithrix argentata</name>
    <dbReference type="NCBI Taxonomy" id="9482"/>
    <lineage>
        <taxon>Eukaryota</taxon>
        <taxon>Metazoa</taxon>
        <taxon>Chordata</taxon>
        <taxon>Craniata</taxon>
        <taxon>Vertebrata</taxon>
        <taxon>Euteleostomi</taxon>
        <taxon>Mammalia</taxon>
        <taxon>Eutheria</taxon>
        <taxon>Euarchontoglires</taxon>
        <taxon>Primates</taxon>
        <taxon>Haplorrhini</taxon>
        <taxon>Platyrrhini</taxon>
        <taxon>Cebidae</taxon>
        <taxon>Callitrichinae</taxon>
        <taxon>Mico</taxon>
    </lineage>
</organism>